<comment type="function">
    <text evidence="1">Small subunit of the glutamine-dependent carbamoyl phosphate synthetase (CPSase). CPSase catalyzes the formation of carbamoyl phosphate from the ammonia moiety of glutamine, carbonate, and phosphate donated by ATP, constituting the first step of 2 biosynthetic pathways, one leading to arginine and/or urea and the other to pyrimidine nucleotides. The small subunit (glutamine amidotransferase) binds and cleaves glutamine to supply the large subunit with the substrate ammonia.</text>
</comment>
<comment type="catalytic activity">
    <reaction evidence="1">
        <text>hydrogencarbonate + L-glutamine + 2 ATP + H2O = carbamoyl phosphate + L-glutamate + 2 ADP + phosphate + 2 H(+)</text>
        <dbReference type="Rhea" id="RHEA:18633"/>
        <dbReference type="ChEBI" id="CHEBI:15377"/>
        <dbReference type="ChEBI" id="CHEBI:15378"/>
        <dbReference type="ChEBI" id="CHEBI:17544"/>
        <dbReference type="ChEBI" id="CHEBI:29985"/>
        <dbReference type="ChEBI" id="CHEBI:30616"/>
        <dbReference type="ChEBI" id="CHEBI:43474"/>
        <dbReference type="ChEBI" id="CHEBI:58228"/>
        <dbReference type="ChEBI" id="CHEBI:58359"/>
        <dbReference type="ChEBI" id="CHEBI:456216"/>
        <dbReference type="EC" id="6.3.5.5"/>
    </reaction>
</comment>
<comment type="catalytic activity">
    <molecule>Carbamoyl phosphate synthase small chain</molecule>
    <reaction evidence="1">
        <text>L-glutamine + H2O = L-glutamate + NH4(+)</text>
        <dbReference type="Rhea" id="RHEA:15889"/>
        <dbReference type="ChEBI" id="CHEBI:15377"/>
        <dbReference type="ChEBI" id="CHEBI:28938"/>
        <dbReference type="ChEBI" id="CHEBI:29985"/>
        <dbReference type="ChEBI" id="CHEBI:58359"/>
    </reaction>
</comment>
<comment type="pathway">
    <text evidence="1">Amino-acid biosynthesis; L-arginine biosynthesis; carbamoyl phosphate from bicarbonate: step 1/1.</text>
</comment>
<comment type="pathway">
    <text evidence="1">Pyrimidine metabolism; UMP biosynthesis via de novo pathway; (S)-dihydroorotate from bicarbonate: step 1/3.</text>
</comment>
<comment type="subunit">
    <text evidence="1">Composed of two chains; the small (or glutamine) chain promotes the hydrolysis of glutamine to ammonia, which is used by the large (or ammonia) chain to synthesize carbamoyl phosphate. Tetramer of heterodimers (alpha,beta)4.</text>
</comment>
<comment type="similarity">
    <text evidence="1">Belongs to the CarA family.</text>
</comment>
<organism>
    <name type="scientific">Streptococcus agalactiae serotype III (strain NEM316)</name>
    <dbReference type="NCBI Taxonomy" id="211110"/>
    <lineage>
        <taxon>Bacteria</taxon>
        <taxon>Bacillati</taxon>
        <taxon>Bacillota</taxon>
        <taxon>Bacilli</taxon>
        <taxon>Lactobacillales</taxon>
        <taxon>Streptococcaceae</taxon>
        <taxon>Streptococcus</taxon>
    </lineage>
</organism>
<keyword id="KW-0028">Amino-acid biosynthesis</keyword>
<keyword id="KW-0055">Arginine biosynthesis</keyword>
<keyword id="KW-0067">ATP-binding</keyword>
<keyword id="KW-0315">Glutamine amidotransferase</keyword>
<keyword id="KW-0436">Ligase</keyword>
<keyword id="KW-0547">Nucleotide-binding</keyword>
<keyword id="KW-0665">Pyrimidine biosynthesis</keyword>
<feature type="chain" id="PRO_0000112325" description="Carbamoyl phosphate synthase small chain">
    <location>
        <begin position="1"/>
        <end position="358"/>
    </location>
</feature>
<feature type="domain" description="Glutamine amidotransferase type-1" evidence="1">
    <location>
        <begin position="171"/>
        <end position="357"/>
    </location>
</feature>
<feature type="region of interest" description="CPSase" evidence="1">
    <location>
        <begin position="1"/>
        <end position="168"/>
    </location>
</feature>
<feature type="active site" description="Nucleophile" evidence="1">
    <location>
        <position position="246"/>
    </location>
</feature>
<feature type="active site" evidence="1">
    <location>
        <position position="330"/>
    </location>
</feature>
<feature type="active site" evidence="1">
    <location>
        <position position="332"/>
    </location>
</feature>
<feature type="binding site" evidence="1">
    <location>
        <position position="45"/>
    </location>
    <ligand>
        <name>L-glutamine</name>
        <dbReference type="ChEBI" id="CHEBI:58359"/>
    </ligand>
</feature>
<feature type="binding site" evidence="1">
    <location>
        <position position="219"/>
    </location>
    <ligand>
        <name>L-glutamine</name>
        <dbReference type="ChEBI" id="CHEBI:58359"/>
    </ligand>
</feature>
<feature type="binding site" evidence="1">
    <location>
        <position position="221"/>
    </location>
    <ligand>
        <name>L-glutamine</name>
        <dbReference type="ChEBI" id="CHEBI:58359"/>
    </ligand>
</feature>
<feature type="binding site" evidence="1">
    <location>
        <position position="247"/>
    </location>
    <ligand>
        <name>L-glutamine</name>
        <dbReference type="ChEBI" id="CHEBI:58359"/>
    </ligand>
</feature>
<feature type="binding site" evidence="1">
    <location>
        <position position="250"/>
    </location>
    <ligand>
        <name>L-glutamine</name>
        <dbReference type="ChEBI" id="CHEBI:58359"/>
    </ligand>
</feature>
<feature type="binding site" evidence="1">
    <location>
        <position position="288"/>
    </location>
    <ligand>
        <name>L-glutamine</name>
        <dbReference type="ChEBI" id="CHEBI:58359"/>
    </ligand>
</feature>
<feature type="binding site" evidence="1">
    <location>
        <position position="290"/>
    </location>
    <ligand>
        <name>L-glutamine</name>
        <dbReference type="ChEBI" id="CHEBI:58359"/>
    </ligand>
</feature>
<feature type="binding site" evidence="1">
    <location>
        <position position="291"/>
    </location>
    <ligand>
        <name>L-glutamine</name>
        <dbReference type="ChEBI" id="CHEBI:58359"/>
    </ligand>
</feature>
<dbReference type="EC" id="6.3.5.5" evidence="1"/>
<dbReference type="EMBL" id="AL766848">
    <property type="protein sequence ID" value="CAD46737.1"/>
    <property type="molecule type" value="Genomic_DNA"/>
</dbReference>
<dbReference type="RefSeq" id="WP_000826109.1">
    <property type="nucleotide sequence ID" value="NC_004368.1"/>
</dbReference>
<dbReference type="SMR" id="P63731"/>
<dbReference type="KEGG" id="san:gbs1078"/>
<dbReference type="eggNOG" id="COG0505">
    <property type="taxonomic scope" value="Bacteria"/>
</dbReference>
<dbReference type="HOGENOM" id="CLU_035901_2_1_9"/>
<dbReference type="UniPathway" id="UPA00068">
    <property type="reaction ID" value="UER00171"/>
</dbReference>
<dbReference type="UniPathway" id="UPA00070">
    <property type="reaction ID" value="UER00115"/>
</dbReference>
<dbReference type="Proteomes" id="UP000000823">
    <property type="component" value="Chromosome"/>
</dbReference>
<dbReference type="GO" id="GO:0005524">
    <property type="term" value="F:ATP binding"/>
    <property type="evidence" value="ECO:0007669"/>
    <property type="project" value="UniProtKB-UniRule"/>
</dbReference>
<dbReference type="GO" id="GO:0004088">
    <property type="term" value="F:carbamoyl-phosphate synthase (glutamine-hydrolyzing) activity"/>
    <property type="evidence" value="ECO:0007669"/>
    <property type="project" value="UniProtKB-UniRule"/>
</dbReference>
<dbReference type="GO" id="GO:0004359">
    <property type="term" value="F:glutaminase activity"/>
    <property type="evidence" value="ECO:0007669"/>
    <property type="project" value="RHEA"/>
</dbReference>
<dbReference type="GO" id="GO:0006207">
    <property type="term" value="P:'de novo' pyrimidine nucleobase biosynthetic process"/>
    <property type="evidence" value="ECO:0007669"/>
    <property type="project" value="InterPro"/>
</dbReference>
<dbReference type="GO" id="GO:0044205">
    <property type="term" value="P:'de novo' UMP biosynthetic process"/>
    <property type="evidence" value="ECO:0007669"/>
    <property type="project" value="UniProtKB-UniRule"/>
</dbReference>
<dbReference type="GO" id="GO:0006541">
    <property type="term" value="P:glutamine metabolic process"/>
    <property type="evidence" value="ECO:0007669"/>
    <property type="project" value="InterPro"/>
</dbReference>
<dbReference type="GO" id="GO:0006526">
    <property type="term" value="P:L-arginine biosynthetic process"/>
    <property type="evidence" value="ECO:0007669"/>
    <property type="project" value="UniProtKB-UniRule"/>
</dbReference>
<dbReference type="CDD" id="cd01744">
    <property type="entry name" value="GATase1_CPSase"/>
    <property type="match status" value="1"/>
</dbReference>
<dbReference type="FunFam" id="3.40.50.880:FF:000029">
    <property type="entry name" value="Carbamoyl-phosphate synthase small chain"/>
    <property type="match status" value="1"/>
</dbReference>
<dbReference type="FunFam" id="3.50.30.20:FF:000001">
    <property type="entry name" value="Carbamoyl-phosphate synthase small chain"/>
    <property type="match status" value="1"/>
</dbReference>
<dbReference type="Gene3D" id="3.40.50.880">
    <property type="match status" value="1"/>
</dbReference>
<dbReference type="Gene3D" id="3.50.30.20">
    <property type="entry name" value="Carbamoyl-phosphate synthase small subunit, N-terminal domain"/>
    <property type="match status" value="1"/>
</dbReference>
<dbReference type="HAMAP" id="MF_01209">
    <property type="entry name" value="CPSase_S_chain"/>
    <property type="match status" value="1"/>
</dbReference>
<dbReference type="InterPro" id="IPR050472">
    <property type="entry name" value="Anth_synth/Amidotransfase"/>
</dbReference>
<dbReference type="InterPro" id="IPR006274">
    <property type="entry name" value="CarbamoylP_synth_ssu"/>
</dbReference>
<dbReference type="InterPro" id="IPR002474">
    <property type="entry name" value="CarbamoylP_synth_ssu_N"/>
</dbReference>
<dbReference type="InterPro" id="IPR036480">
    <property type="entry name" value="CarbP_synth_ssu_N_sf"/>
</dbReference>
<dbReference type="InterPro" id="IPR029062">
    <property type="entry name" value="Class_I_gatase-like"/>
</dbReference>
<dbReference type="InterPro" id="IPR035686">
    <property type="entry name" value="CPSase_GATase1"/>
</dbReference>
<dbReference type="InterPro" id="IPR017926">
    <property type="entry name" value="GATASE"/>
</dbReference>
<dbReference type="NCBIfam" id="TIGR01368">
    <property type="entry name" value="CPSaseIIsmall"/>
    <property type="match status" value="1"/>
</dbReference>
<dbReference type="NCBIfam" id="NF009475">
    <property type="entry name" value="PRK12838.1"/>
    <property type="match status" value="1"/>
</dbReference>
<dbReference type="PANTHER" id="PTHR43418:SF7">
    <property type="entry name" value="CARBAMOYL-PHOSPHATE SYNTHASE SMALL CHAIN"/>
    <property type="match status" value="1"/>
</dbReference>
<dbReference type="PANTHER" id="PTHR43418">
    <property type="entry name" value="MULTIFUNCTIONAL TRYPTOPHAN BIOSYNTHESIS PROTEIN-RELATED"/>
    <property type="match status" value="1"/>
</dbReference>
<dbReference type="Pfam" id="PF00988">
    <property type="entry name" value="CPSase_sm_chain"/>
    <property type="match status" value="1"/>
</dbReference>
<dbReference type="Pfam" id="PF00117">
    <property type="entry name" value="GATase"/>
    <property type="match status" value="1"/>
</dbReference>
<dbReference type="PRINTS" id="PR00097">
    <property type="entry name" value="ANTSNTHASEII"/>
</dbReference>
<dbReference type="PRINTS" id="PR00099">
    <property type="entry name" value="CPSGATASE"/>
</dbReference>
<dbReference type="PRINTS" id="PR00096">
    <property type="entry name" value="GATASE"/>
</dbReference>
<dbReference type="SMART" id="SM01097">
    <property type="entry name" value="CPSase_sm_chain"/>
    <property type="match status" value="1"/>
</dbReference>
<dbReference type="SUPFAM" id="SSF52021">
    <property type="entry name" value="Carbamoyl phosphate synthetase, small subunit N-terminal domain"/>
    <property type="match status" value="1"/>
</dbReference>
<dbReference type="SUPFAM" id="SSF52317">
    <property type="entry name" value="Class I glutamine amidotransferase-like"/>
    <property type="match status" value="1"/>
</dbReference>
<dbReference type="PROSITE" id="PS51273">
    <property type="entry name" value="GATASE_TYPE_1"/>
    <property type="match status" value="1"/>
</dbReference>
<name>CARA_STRA3</name>
<accession>P63731</accession>
<accession>Q8DZQ6</accession>
<accession>Q8E5F4</accession>
<gene>
    <name evidence="1" type="primary">carA</name>
    <name type="ordered locus">gbs1078</name>
</gene>
<reference key="1">
    <citation type="journal article" date="2002" name="Mol. Microbiol.">
        <title>Genome sequence of Streptococcus agalactiae, a pathogen causing invasive neonatal disease.</title>
        <authorList>
            <person name="Glaser P."/>
            <person name="Rusniok C."/>
            <person name="Buchrieser C."/>
            <person name="Chevalier F."/>
            <person name="Frangeul L."/>
            <person name="Msadek T."/>
            <person name="Zouine M."/>
            <person name="Couve E."/>
            <person name="Lalioui L."/>
            <person name="Poyart C."/>
            <person name="Trieu-Cuot P."/>
            <person name="Kunst F."/>
        </authorList>
    </citation>
    <scope>NUCLEOTIDE SEQUENCE [LARGE SCALE GENOMIC DNA]</scope>
    <source>
        <strain>NEM316</strain>
    </source>
</reference>
<sequence>MKRLLLLEDGSVFEGEAFGADVETSGEIVFSTGMTGYQESITDQSYNGQIITFTYPLIGNYGINRDDYESIRPTCKGVVIYEWAEYPSNWRQQMTLDEFLKLKGIPGISGIDTRALTKIIRKHGTMKACLINEGNSIHEALENLQKSVLLNDQIEQVSTKLAYASPGVGKNIVLVDFGLKHSILRELSQRQCHITVVPHTTTAQEILNLNPDGVLLSNGPGNPEQLPNALQMIQEIQGKIPIFGICMGHQLFAKANGAKTYKMTFGHRGFNHAVRHLQTGQVDFTSQNHGYAVSREDFPEALFITHEEINDKTVEGVRHKYYPAFSVQFHPDAAPGPHDTSYLFDEFINMIDDFQQKS</sequence>
<proteinExistence type="inferred from homology"/>
<protein>
    <recommendedName>
        <fullName evidence="1">Carbamoyl phosphate synthase small chain</fullName>
        <ecNumber evidence="1">6.3.5.5</ecNumber>
    </recommendedName>
    <alternativeName>
        <fullName evidence="1">Carbamoyl phosphate synthetase glutamine chain</fullName>
    </alternativeName>
</protein>
<evidence type="ECO:0000255" key="1">
    <source>
        <dbReference type="HAMAP-Rule" id="MF_01209"/>
    </source>
</evidence>